<feature type="chain" id="PRO_1000099685" description="3-phosphoshikimate 1-carboxyvinyltransferase">
    <location>
        <begin position="1"/>
        <end position="435"/>
    </location>
</feature>
<feature type="active site" description="Proton acceptor" evidence="1">
    <location>
        <position position="312"/>
    </location>
</feature>
<feature type="binding site" evidence="1">
    <location>
        <position position="21"/>
    </location>
    <ligand>
        <name>3-phosphoshikimate</name>
        <dbReference type="ChEBI" id="CHEBI:145989"/>
    </ligand>
</feature>
<feature type="binding site" evidence="1">
    <location>
        <position position="21"/>
    </location>
    <ligand>
        <name>phosphoenolpyruvate</name>
        <dbReference type="ChEBI" id="CHEBI:58702"/>
    </ligand>
</feature>
<feature type="binding site" evidence="1">
    <location>
        <position position="22"/>
    </location>
    <ligand>
        <name>3-phosphoshikimate</name>
        <dbReference type="ChEBI" id="CHEBI:145989"/>
    </ligand>
</feature>
<feature type="binding site" evidence="1">
    <location>
        <position position="26"/>
    </location>
    <ligand>
        <name>3-phosphoshikimate</name>
        <dbReference type="ChEBI" id="CHEBI:145989"/>
    </ligand>
</feature>
<feature type="binding site" evidence="1">
    <location>
        <position position="98"/>
    </location>
    <ligand>
        <name>phosphoenolpyruvate</name>
        <dbReference type="ChEBI" id="CHEBI:58702"/>
    </ligand>
</feature>
<feature type="binding site" evidence="1">
    <location>
        <position position="126"/>
    </location>
    <ligand>
        <name>phosphoenolpyruvate</name>
        <dbReference type="ChEBI" id="CHEBI:58702"/>
    </ligand>
</feature>
<feature type="binding site" evidence="1">
    <location>
        <position position="169"/>
    </location>
    <ligand>
        <name>3-phosphoshikimate</name>
        <dbReference type="ChEBI" id="CHEBI:145989"/>
    </ligand>
</feature>
<feature type="binding site" evidence="1">
    <location>
        <position position="170"/>
    </location>
    <ligand>
        <name>3-phosphoshikimate</name>
        <dbReference type="ChEBI" id="CHEBI:145989"/>
    </ligand>
</feature>
<feature type="binding site" evidence="1">
    <location>
        <position position="171"/>
    </location>
    <ligand>
        <name>3-phosphoshikimate</name>
        <dbReference type="ChEBI" id="CHEBI:145989"/>
    </ligand>
</feature>
<feature type="binding site" evidence="1">
    <location>
        <position position="171"/>
    </location>
    <ligand>
        <name>phosphoenolpyruvate</name>
        <dbReference type="ChEBI" id="CHEBI:58702"/>
    </ligand>
</feature>
<feature type="binding site" evidence="1">
    <location>
        <position position="197"/>
    </location>
    <ligand>
        <name>3-phosphoshikimate</name>
        <dbReference type="ChEBI" id="CHEBI:145989"/>
    </ligand>
</feature>
<feature type="binding site" evidence="1">
    <location>
        <position position="312"/>
    </location>
    <ligand>
        <name>3-phosphoshikimate</name>
        <dbReference type="ChEBI" id="CHEBI:145989"/>
    </ligand>
</feature>
<feature type="binding site" evidence="1">
    <location>
        <position position="339"/>
    </location>
    <ligand>
        <name>3-phosphoshikimate</name>
        <dbReference type="ChEBI" id="CHEBI:145989"/>
    </ligand>
</feature>
<feature type="binding site" evidence="1">
    <location>
        <position position="343"/>
    </location>
    <ligand>
        <name>phosphoenolpyruvate</name>
        <dbReference type="ChEBI" id="CHEBI:58702"/>
    </ligand>
</feature>
<feature type="binding site" evidence="1">
    <location>
        <position position="386"/>
    </location>
    <ligand>
        <name>phosphoenolpyruvate</name>
        <dbReference type="ChEBI" id="CHEBI:58702"/>
    </ligand>
</feature>
<feature type="binding site" evidence="1">
    <location>
        <position position="412"/>
    </location>
    <ligand>
        <name>phosphoenolpyruvate</name>
        <dbReference type="ChEBI" id="CHEBI:58702"/>
    </ligand>
</feature>
<comment type="function">
    <text evidence="1">Catalyzes the transfer of the enolpyruvyl moiety of phosphoenolpyruvate (PEP) to the 5-hydroxyl of shikimate-3-phosphate (S3P) to produce enolpyruvyl shikimate-3-phosphate and inorganic phosphate.</text>
</comment>
<comment type="catalytic activity">
    <reaction evidence="1">
        <text>3-phosphoshikimate + phosphoenolpyruvate = 5-O-(1-carboxyvinyl)-3-phosphoshikimate + phosphate</text>
        <dbReference type="Rhea" id="RHEA:21256"/>
        <dbReference type="ChEBI" id="CHEBI:43474"/>
        <dbReference type="ChEBI" id="CHEBI:57701"/>
        <dbReference type="ChEBI" id="CHEBI:58702"/>
        <dbReference type="ChEBI" id="CHEBI:145989"/>
        <dbReference type="EC" id="2.5.1.19"/>
    </reaction>
    <physiologicalReaction direction="left-to-right" evidence="1">
        <dbReference type="Rhea" id="RHEA:21257"/>
    </physiologicalReaction>
</comment>
<comment type="pathway">
    <text evidence="1">Metabolic intermediate biosynthesis; chorismate biosynthesis; chorismate from D-erythrose 4-phosphate and phosphoenolpyruvate: step 6/7.</text>
</comment>
<comment type="subunit">
    <text evidence="1">Monomer.</text>
</comment>
<comment type="subcellular location">
    <subcellularLocation>
        <location evidence="1">Cytoplasm</location>
    </subcellularLocation>
</comment>
<comment type="similarity">
    <text evidence="1">Belongs to the EPSP synthase family.</text>
</comment>
<reference key="1">
    <citation type="submission" date="2007-06" db="EMBL/GenBank/DDBJ databases">
        <title>Complete sequence of Clostridium beijerinckii NCIMB 8052.</title>
        <authorList>
            <consortium name="US DOE Joint Genome Institute"/>
            <person name="Copeland A."/>
            <person name="Lucas S."/>
            <person name="Lapidus A."/>
            <person name="Barry K."/>
            <person name="Detter J.C."/>
            <person name="Glavina del Rio T."/>
            <person name="Hammon N."/>
            <person name="Israni S."/>
            <person name="Dalin E."/>
            <person name="Tice H."/>
            <person name="Pitluck S."/>
            <person name="Sims D."/>
            <person name="Brettin T."/>
            <person name="Bruce D."/>
            <person name="Tapia R."/>
            <person name="Brainard J."/>
            <person name="Schmutz J."/>
            <person name="Larimer F."/>
            <person name="Land M."/>
            <person name="Hauser L."/>
            <person name="Kyrpides N."/>
            <person name="Mikhailova N."/>
            <person name="Bennet G."/>
            <person name="Cann I."/>
            <person name="Chen J.-S."/>
            <person name="Contreras A.L."/>
            <person name="Jones D."/>
            <person name="Kashket E."/>
            <person name="Mitchell W."/>
            <person name="Stoddard S."/>
            <person name="Schwarz W."/>
            <person name="Qureshi N."/>
            <person name="Young M."/>
            <person name="Shi Z."/>
            <person name="Ezeji T."/>
            <person name="White B."/>
            <person name="Blaschek H."/>
            <person name="Richardson P."/>
        </authorList>
    </citation>
    <scope>NUCLEOTIDE SEQUENCE [LARGE SCALE GENOMIC DNA]</scope>
    <source>
        <strain>ATCC 51743 / NCIMB 8052</strain>
    </source>
</reference>
<dbReference type="EC" id="2.5.1.19" evidence="1"/>
<dbReference type="EMBL" id="CP000721">
    <property type="protein sequence ID" value="ABR36684.1"/>
    <property type="molecule type" value="Genomic_DNA"/>
</dbReference>
<dbReference type="RefSeq" id="WP_012060731.1">
    <property type="nucleotide sequence ID" value="NC_009617.1"/>
</dbReference>
<dbReference type="SMR" id="A6M254"/>
<dbReference type="KEGG" id="cbe:Cbei_4575"/>
<dbReference type="eggNOG" id="COG0128">
    <property type="taxonomic scope" value="Bacteria"/>
</dbReference>
<dbReference type="HOGENOM" id="CLU_024321_0_0_9"/>
<dbReference type="UniPathway" id="UPA00053">
    <property type="reaction ID" value="UER00089"/>
</dbReference>
<dbReference type="Proteomes" id="UP000000565">
    <property type="component" value="Chromosome"/>
</dbReference>
<dbReference type="GO" id="GO:0005737">
    <property type="term" value="C:cytoplasm"/>
    <property type="evidence" value="ECO:0007669"/>
    <property type="project" value="UniProtKB-SubCell"/>
</dbReference>
<dbReference type="GO" id="GO:0003866">
    <property type="term" value="F:3-phosphoshikimate 1-carboxyvinyltransferase activity"/>
    <property type="evidence" value="ECO:0007669"/>
    <property type="project" value="UniProtKB-UniRule"/>
</dbReference>
<dbReference type="GO" id="GO:0008652">
    <property type="term" value="P:amino acid biosynthetic process"/>
    <property type="evidence" value="ECO:0007669"/>
    <property type="project" value="UniProtKB-KW"/>
</dbReference>
<dbReference type="GO" id="GO:0009073">
    <property type="term" value="P:aromatic amino acid family biosynthetic process"/>
    <property type="evidence" value="ECO:0007669"/>
    <property type="project" value="UniProtKB-KW"/>
</dbReference>
<dbReference type="GO" id="GO:0009423">
    <property type="term" value="P:chorismate biosynthetic process"/>
    <property type="evidence" value="ECO:0007669"/>
    <property type="project" value="UniProtKB-UniRule"/>
</dbReference>
<dbReference type="CDD" id="cd01556">
    <property type="entry name" value="EPSP_synthase"/>
    <property type="match status" value="1"/>
</dbReference>
<dbReference type="Gene3D" id="3.65.10.10">
    <property type="entry name" value="Enolpyruvate transferase domain"/>
    <property type="match status" value="2"/>
</dbReference>
<dbReference type="HAMAP" id="MF_00210">
    <property type="entry name" value="EPSP_synth"/>
    <property type="match status" value="1"/>
</dbReference>
<dbReference type="InterPro" id="IPR001986">
    <property type="entry name" value="Enolpyruvate_Tfrase_dom"/>
</dbReference>
<dbReference type="InterPro" id="IPR036968">
    <property type="entry name" value="Enolpyruvate_Tfrase_sf"/>
</dbReference>
<dbReference type="InterPro" id="IPR006264">
    <property type="entry name" value="EPSP_synthase"/>
</dbReference>
<dbReference type="InterPro" id="IPR023193">
    <property type="entry name" value="EPSP_synthase_CS"/>
</dbReference>
<dbReference type="InterPro" id="IPR013792">
    <property type="entry name" value="RNA3'P_cycl/enolpyr_Trfase_a/b"/>
</dbReference>
<dbReference type="NCBIfam" id="TIGR01356">
    <property type="entry name" value="aroA"/>
    <property type="match status" value="1"/>
</dbReference>
<dbReference type="PANTHER" id="PTHR21090">
    <property type="entry name" value="AROM/DEHYDROQUINATE SYNTHASE"/>
    <property type="match status" value="1"/>
</dbReference>
<dbReference type="PANTHER" id="PTHR21090:SF5">
    <property type="entry name" value="PENTAFUNCTIONAL AROM POLYPEPTIDE"/>
    <property type="match status" value="1"/>
</dbReference>
<dbReference type="Pfam" id="PF00275">
    <property type="entry name" value="EPSP_synthase"/>
    <property type="match status" value="1"/>
</dbReference>
<dbReference type="PIRSF" id="PIRSF000505">
    <property type="entry name" value="EPSPS"/>
    <property type="match status" value="1"/>
</dbReference>
<dbReference type="SUPFAM" id="SSF55205">
    <property type="entry name" value="EPT/RTPC-like"/>
    <property type="match status" value="1"/>
</dbReference>
<dbReference type="PROSITE" id="PS00885">
    <property type="entry name" value="EPSP_SYNTHASE_2"/>
    <property type="match status" value="1"/>
</dbReference>
<name>AROA_CLOB8</name>
<evidence type="ECO:0000255" key="1">
    <source>
        <dbReference type="HAMAP-Rule" id="MF_00210"/>
    </source>
</evidence>
<protein>
    <recommendedName>
        <fullName evidence="1">3-phosphoshikimate 1-carboxyvinyltransferase</fullName>
        <ecNumber evidence="1">2.5.1.19</ecNumber>
    </recommendedName>
    <alternativeName>
        <fullName evidence="1">5-enolpyruvylshikimate-3-phosphate synthase</fullName>
        <shortName evidence="1">EPSP synthase</shortName>
        <shortName evidence="1">EPSPS</shortName>
    </alternativeName>
</protein>
<keyword id="KW-0028">Amino-acid biosynthesis</keyword>
<keyword id="KW-0057">Aromatic amino acid biosynthesis</keyword>
<keyword id="KW-0963">Cytoplasm</keyword>
<keyword id="KW-0808">Transferase</keyword>
<organism>
    <name type="scientific">Clostridium beijerinckii (strain ATCC 51743 / NCIMB 8052)</name>
    <name type="common">Clostridium acetobutylicum</name>
    <dbReference type="NCBI Taxonomy" id="290402"/>
    <lineage>
        <taxon>Bacteria</taxon>
        <taxon>Bacillati</taxon>
        <taxon>Bacillota</taxon>
        <taxon>Clostridia</taxon>
        <taxon>Eubacteriales</taxon>
        <taxon>Clostridiaceae</taxon>
        <taxon>Clostridium</taxon>
    </lineage>
</organism>
<proteinExistence type="inferred from homology"/>
<gene>
    <name evidence="1" type="primary">aroA</name>
    <name type="ordered locus">Cbei_4575</name>
</gene>
<sequence>MGNLKIYPGKLSGEVKIPPSKSMAHRAVICAALGDGVSKVTNIDYSDDIIATIEAMSSLGAKITKKEDYLEVYGINSPENIKANSVKEQRTIDCNESGSTLRFLVPIAALFDGVNRFVGRGNLGKRPLDTYYKIFDEQGIKYSYKDGILDLKTEGKLKAGEFKMEGNISSQFITGLLFTLPLLDGDSKIVITTEMESKGYIDLTLRAIKDFGVEIINNNYEEFIIKGNQIYKSIDYRVEGDYSQAAFFFCADALSSNIVLNDLKLDSLQGDKEVIDILQRMGLKLNNKDNGLIGSASLGLKSTIIDGSQCPDIIPVVSLVAALSEGTTEIINAGRLRIKECDRLAAVTSELNKLGAKIIEKEEGLIIEGVKELKGNVEVWSHKDHRIAMTMAIASTMCKERIILKDYECVSKSYPQFWDDFKNLGGVFDEWNVGE</sequence>
<accession>A6M254</accession>